<gene>
    <name evidence="1" type="primary">dinB</name>
    <name type="ordered locus">NGO_0738</name>
</gene>
<sequence length="352" mass="39538">MSLRKIIHIDMDAFYASVELREQPHLKGRPVVVAWEGARSVICAASYEARQFGLHSAMSVATVKRLCPQAVYVPPHFDLYRQVSAQIHAVFRRYTDLIEPLSLDEAYLDVTRNFKNIPYAGEVAKEIRAAIFAETGLTASAGIAPNKFLAKIASDWRKPNGQFVLPPHKVMAFLETLPLGKIPGAGKVTLKKMQSLGMRTAGDLRRFERGELLNHFGRYGYRLYDLARGTDEHPVKAERERLQISTEITLPEDLPLGQAAGHLPHLAEDLWRQITRKNVEAQSVTLKLKTYDFRIITRTLTYSSVLPDCAALLQAAQMLMARVPPQTEDAFRLIGIGVGRLVPKNQQQDLWA</sequence>
<name>DPO4_NEIG1</name>
<reference key="1">
    <citation type="submission" date="2003-03" db="EMBL/GenBank/DDBJ databases">
        <title>The complete genome sequence of Neisseria gonorrhoeae.</title>
        <authorList>
            <person name="Lewis L.A."/>
            <person name="Gillaspy A.F."/>
            <person name="McLaughlin R.E."/>
            <person name="Gipson M."/>
            <person name="Ducey T.F."/>
            <person name="Ownbey T."/>
            <person name="Hartman K."/>
            <person name="Nydick C."/>
            <person name="Carson M.B."/>
            <person name="Vaughn J."/>
            <person name="Thomson C."/>
            <person name="Song L."/>
            <person name="Lin S."/>
            <person name="Yuan X."/>
            <person name="Najar F."/>
            <person name="Zhan M."/>
            <person name="Ren Q."/>
            <person name="Zhu H."/>
            <person name="Qi S."/>
            <person name="Kenton S.M."/>
            <person name="Lai H."/>
            <person name="White J.D."/>
            <person name="Clifton S."/>
            <person name="Roe B.A."/>
            <person name="Dyer D.W."/>
        </authorList>
    </citation>
    <scope>NUCLEOTIDE SEQUENCE [LARGE SCALE GENOMIC DNA]</scope>
    <source>
        <strain>ATCC 700825 / FA 1090</strain>
    </source>
</reference>
<keyword id="KW-0963">Cytoplasm</keyword>
<keyword id="KW-0227">DNA damage</keyword>
<keyword id="KW-0234">DNA repair</keyword>
<keyword id="KW-0235">DNA replication</keyword>
<keyword id="KW-0238">DNA-binding</keyword>
<keyword id="KW-0239">DNA-directed DNA polymerase</keyword>
<keyword id="KW-0460">Magnesium</keyword>
<keyword id="KW-0479">Metal-binding</keyword>
<keyword id="KW-0515">Mutator protein</keyword>
<keyword id="KW-0548">Nucleotidyltransferase</keyword>
<keyword id="KW-1185">Reference proteome</keyword>
<keyword id="KW-0808">Transferase</keyword>
<feature type="chain" id="PRO_1000084903" description="DNA polymerase IV">
    <location>
        <begin position="1"/>
        <end position="352"/>
    </location>
</feature>
<feature type="domain" description="UmuC" evidence="1">
    <location>
        <begin position="6"/>
        <end position="186"/>
    </location>
</feature>
<feature type="active site" evidence="1">
    <location>
        <position position="105"/>
    </location>
</feature>
<feature type="binding site" evidence="1">
    <location>
        <position position="10"/>
    </location>
    <ligand>
        <name>Mg(2+)</name>
        <dbReference type="ChEBI" id="CHEBI:18420"/>
    </ligand>
</feature>
<feature type="binding site" evidence="1">
    <location>
        <position position="104"/>
    </location>
    <ligand>
        <name>Mg(2+)</name>
        <dbReference type="ChEBI" id="CHEBI:18420"/>
    </ligand>
</feature>
<feature type="site" description="Substrate discrimination" evidence="1">
    <location>
        <position position="15"/>
    </location>
</feature>
<proteinExistence type="inferred from homology"/>
<dbReference type="EC" id="2.7.7.7" evidence="1"/>
<dbReference type="EMBL" id="AE004969">
    <property type="protein sequence ID" value="AAW89455.1"/>
    <property type="molecule type" value="Genomic_DNA"/>
</dbReference>
<dbReference type="RefSeq" id="WP_003695315.1">
    <property type="nucleotide sequence ID" value="NC_002946.2"/>
</dbReference>
<dbReference type="RefSeq" id="YP_207867.1">
    <property type="nucleotide sequence ID" value="NC_002946.2"/>
</dbReference>
<dbReference type="SMR" id="Q5F8N2"/>
<dbReference type="STRING" id="242231.NGO_0738"/>
<dbReference type="KEGG" id="ngo:NGO_0738"/>
<dbReference type="PATRIC" id="fig|242231.10.peg.879"/>
<dbReference type="HOGENOM" id="CLU_012348_1_2_4"/>
<dbReference type="Proteomes" id="UP000000535">
    <property type="component" value="Chromosome"/>
</dbReference>
<dbReference type="GO" id="GO:0005829">
    <property type="term" value="C:cytosol"/>
    <property type="evidence" value="ECO:0007669"/>
    <property type="project" value="TreeGrafter"/>
</dbReference>
<dbReference type="GO" id="GO:0003684">
    <property type="term" value="F:damaged DNA binding"/>
    <property type="evidence" value="ECO:0007669"/>
    <property type="project" value="InterPro"/>
</dbReference>
<dbReference type="GO" id="GO:0003887">
    <property type="term" value="F:DNA-directed DNA polymerase activity"/>
    <property type="evidence" value="ECO:0007669"/>
    <property type="project" value="UniProtKB-UniRule"/>
</dbReference>
<dbReference type="GO" id="GO:0000287">
    <property type="term" value="F:magnesium ion binding"/>
    <property type="evidence" value="ECO:0007669"/>
    <property type="project" value="UniProtKB-UniRule"/>
</dbReference>
<dbReference type="GO" id="GO:0006261">
    <property type="term" value="P:DNA-templated DNA replication"/>
    <property type="evidence" value="ECO:0007669"/>
    <property type="project" value="UniProtKB-UniRule"/>
</dbReference>
<dbReference type="GO" id="GO:0042276">
    <property type="term" value="P:error-prone translesion synthesis"/>
    <property type="evidence" value="ECO:0007669"/>
    <property type="project" value="TreeGrafter"/>
</dbReference>
<dbReference type="GO" id="GO:0009432">
    <property type="term" value="P:SOS response"/>
    <property type="evidence" value="ECO:0007669"/>
    <property type="project" value="TreeGrafter"/>
</dbReference>
<dbReference type="CDD" id="cd03586">
    <property type="entry name" value="PolY_Pol_IV_kappa"/>
    <property type="match status" value="1"/>
</dbReference>
<dbReference type="FunFam" id="1.10.150.20:FF:000019">
    <property type="entry name" value="DNA polymerase IV"/>
    <property type="match status" value="1"/>
</dbReference>
<dbReference type="FunFam" id="3.30.1490.100:FF:000004">
    <property type="entry name" value="DNA polymerase IV"/>
    <property type="match status" value="1"/>
</dbReference>
<dbReference type="FunFam" id="3.30.70.270:FF:000070">
    <property type="entry name" value="DNA polymerase IV"/>
    <property type="match status" value="1"/>
</dbReference>
<dbReference type="Gene3D" id="3.30.70.270">
    <property type="match status" value="2"/>
</dbReference>
<dbReference type="Gene3D" id="3.40.1170.60">
    <property type="match status" value="1"/>
</dbReference>
<dbReference type="Gene3D" id="1.10.150.20">
    <property type="entry name" value="5' to 3' exonuclease, C-terminal subdomain"/>
    <property type="match status" value="1"/>
</dbReference>
<dbReference type="Gene3D" id="3.30.1490.100">
    <property type="entry name" value="DNA polymerase, Y-family, little finger domain"/>
    <property type="match status" value="1"/>
</dbReference>
<dbReference type="HAMAP" id="MF_01113">
    <property type="entry name" value="DNApol_IV"/>
    <property type="match status" value="1"/>
</dbReference>
<dbReference type="InterPro" id="IPR043502">
    <property type="entry name" value="DNA/RNA_pol_sf"/>
</dbReference>
<dbReference type="InterPro" id="IPR036775">
    <property type="entry name" value="DNA_pol_Y-fam_lit_finger_sf"/>
</dbReference>
<dbReference type="InterPro" id="IPR017961">
    <property type="entry name" value="DNA_pol_Y-fam_little_finger"/>
</dbReference>
<dbReference type="InterPro" id="IPR050116">
    <property type="entry name" value="DNA_polymerase-Y"/>
</dbReference>
<dbReference type="InterPro" id="IPR022880">
    <property type="entry name" value="DNApol_IV"/>
</dbReference>
<dbReference type="InterPro" id="IPR053848">
    <property type="entry name" value="IMS_HHH_1"/>
</dbReference>
<dbReference type="InterPro" id="IPR043128">
    <property type="entry name" value="Rev_trsase/Diguanyl_cyclase"/>
</dbReference>
<dbReference type="InterPro" id="IPR001126">
    <property type="entry name" value="UmuC"/>
</dbReference>
<dbReference type="NCBIfam" id="NF002677">
    <property type="entry name" value="PRK02406.1"/>
    <property type="match status" value="1"/>
</dbReference>
<dbReference type="PANTHER" id="PTHR11076:SF33">
    <property type="entry name" value="DNA POLYMERASE KAPPA"/>
    <property type="match status" value="1"/>
</dbReference>
<dbReference type="PANTHER" id="PTHR11076">
    <property type="entry name" value="DNA REPAIR POLYMERASE UMUC / TRANSFERASE FAMILY MEMBER"/>
    <property type="match status" value="1"/>
</dbReference>
<dbReference type="Pfam" id="PF00817">
    <property type="entry name" value="IMS"/>
    <property type="match status" value="1"/>
</dbReference>
<dbReference type="Pfam" id="PF11799">
    <property type="entry name" value="IMS_C"/>
    <property type="match status" value="1"/>
</dbReference>
<dbReference type="Pfam" id="PF21999">
    <property type="entry name" value="IMS_HHH_1"/>
    <property type="match status" value="1"/>
</dbReference>
<dbReference type="SUPFAM" id="SSF56672">
    <property type="entry name" value="DNA/RNA polymerases"/>
    <property type="match status" value="1"/>
</dbReference>
<dbReference type="SUPFAM" id="SSF100879">
    <property type="entry name" value="Lesion bypass DNA polymerase (Y-family), little finger domain"/>
    <property type="match status" value="1"/>
</dbReference>
<dbReference type="PROSITE" id="PS50173">
    <property type="entry name" value="UMUC"/>
    <property type="match status" value="1"/>
</dbReference>
<accession>Q5F8N2</accession>
<organism>
    <name type="scientific">Neisseria gonorrhoeae (strain ATCC 700825 / FA 1090)</name>
    <dbReference type="NCBI Taxonomy" id="242231"/>
    <lineage>
        <taxon>Bacteria</taxon>
        <taxon>Pseudomonadati</taxon>
        <taxon>Pseudomonadota</taxon>
        <taxon>Betaproteobacteria</taxon>
        <taxon>Neisseriales</taxon>
        <taxon>Neisseriaceae</taxon>
        <taxon>Neisseria</taxon>
    </lineage>
</organism>
<protein>
    <recommendedName>
        <fullName evidence="1">DNA polymerase IV</fullName>
        <shortName evidence="1">Pol IV</shortName>
        <ecNumber evidence="1">2.7.7.7</ecNumber>
    </recommendedName>
</protein>
<comment type="function">
    <text evidence="1">Poorly processive, error-prone DNA polymerase involved in untargeted mutagenesis. Copies undamaged DNA at stalled replication forks, which arise in vivo from mismatched or misaligned primer ends. These misaligned primers can be extended by PolIV. Exhibits no 3'-5' exonuclease (proofreading) activity. May be involved in translesional synthesis, in conjunction with the beta clamp from PolIII.</text>
</comment>
<comment type="catalytic activity">
    <reaction evidence="1">
        <text>DNA(n) + a 2'-deoxyribonucleoside 5'-triphosphate = DNA(n+1) + diphosphate</text>
        <dbReference type="Rhea" id="RHEA:22508"/>
        <dbReference type="Rhea" id="RHEA-COMP:17339"/>
        <dbReference type="Rhea" id="RHEA-COMP:17340"/>
        <dbReference type="ChEBI" id="CHEBI:33019"/>
        <dbReference type="ChEBI" id="CHEBI:61560"/>
        <dbReference type="ChEBI" id="CHEBI:173112"/>
        <dbReference type="EC" id="2.7.7.7"/>
    </reaction>
</comment>
<comment type="cofactor">
    <cofactor evidence="1">
        <name>Mg(2+)</name>
        <dbReference type="ChEBI" id="CHEBI:18420"/>
    </cofactor>
    <text evidence="1">Binds 2 magnesium ions per subunit.</text>
</comment>
<comment type="subunit">
    <text evidence="1">Monomer.</text>
</comment>
<comment type="subcellular location">
    <subcellularLocation>
        <location evidence="1">Cytoplasm</location>
    </subcellularLocation>
</comment>
<comment type="similarity">
    <text evidence="1">Belongs to the DNA polymerase type-Y family.</text>
</comment>
<evidence type="ECO:0000255" key="1">
    <source>
        <dbReference type="HAMAP-Rule" id="MF_01113"/>
    </source>
</evidence>